<accession>Q393X8</accession>
<comment type="function">
    <text evidence="1">Formation of pseudouridine at positions 38, 39 and 40 in the anticodon stem and loop of transfer RNAs.</text>
</comment>
<comment type="catalytic activity">
    <reaction evidence="1">
        <text>uridine(38/39/40) in tRNA = pseudouridine(38/39/40) in tRNA</text>
        <dbReference type="Rhea" id="RHEA:22376"/>
        <dbReference type="Rhea" id="RHEA-COMP:10085"/>
        <dbReference type="Rhea" id="RHEA-COMP:10087"/>
        <dbReference type="ChEBI" id="CHEBI:65314"/>
        <dbReference type="ChEBI" id="CHEBI:65315"/>
        <dbReference type="EC" id="5.4.99.12"/>
    </reaction>
</comment>
<comment type="subunit">
    <text evidence="1">Homodimer.</text>
</comment>
<comment type="similarity">
    <text evidence="1">Belongs to the tRNA pseudouridine synthase TruA family.</text>
</comment>
<proteinExistence type="inferred from homology"/>
<reference key="1">
    <citation type="submission" date="2005-10" db="EMBL/GenBank/DDBJ databases">
        <title>Complete sequence of chromosome 2 of Burkholderia sp. 383.</title>
        <authorList>
            <consortium name="US DOE Joint Genome Institute"/>
            <person name="Copeland A."/>
            <person name="Lucas S."/>
            <person name="Lapidus A."/>
            <person name="Barry K."/>
            <person name="Detter J.C."/>
            <person name="Glavina T."/>
            <person name="Hammon N."/>
            <person name="Israni S."/>
            <person name="Pitluck S."/>
            <person name="Chain P."/>
            <person name="Malfatti S."/>
            <person name="Shin M."/>
            <person name="Vergez L."/>
            <person name="Schmutz J."/>
            <person name="Larimer F."/>
            <person name="Land M."/>
            <person name="Kyrpides N."/>
            <person name="Lykidis A."/>
            <person name="Richardson P."/>
        </authorList>
    </citation>
    <scope>NUCLEOTIDE SEQUENCE [LARGE SCALE GENOMIC DNA]</scope>
    <source>
        <strain>ATCC 17760 / DSM 23089 / LMG 22485 / NCIMB 9086 / R18194 / 383</strain>
    </source>
</reference>
<protein>
    <recommendedName>
        <fullName evidence="1">tRNA pseudouridine synthase A</fullName>
        <ecNumber evidence="1">5.4.99.12</ecNumber>
    </recommendedName>
    <alternativeName>
        <fullName evidence="1">tRNA pseudouridine(38-40) synthase</fullName>
    </alternativeName>
    <alternativeName>
        <fullName evidence="1">tRNA pseudouridylate synthase I</fullName>
    </alternativeName>
    <alternativeName>
        <fullName evidence="1">tRNA-uridine isomerase I</fullName>
    </alternativeName>
</protein>
<sequence>MRIALGIQYDGAAFCGWQAQPHGKTVQDRLEHALAEFARVPLHTTVAGRTDTGVHGLGQVVHFDTDLDREVFSWVRGTNAFLPSTVAVQWAKPMPETFHARFSAFERTYYYALYVHPVRSPMLAGRAGWIHTPLDDDAMRAAAAHLIGEHDFSSFRSSECQSKTPVKHLYQIDVRRVGHFVHFRFRANAFLHHMVRNLMGCLVAVGRGRYPADWLADVLAGRDRNLAAPTFMADGLYLAHVGYPAEFAVPPAQLGSVPWSSVWADLDPQS</sequence>
<keyword id="KW-0413">Isomerase</keyword>
<keyword id="KW-0819">tRNA processing</keyword>
<evidence type="ECO:0000255" key="1">
    <source>
        <dbReference type="HAMAP-Rule" id="MF_00171"/>
    </source>
</evidence>
<name>TRUA_BURL3</name>
<dbReference type="EC" id="5.4.99.12" evidence="1"/>
<dbReference type="EMBL" id="CP000152">
    <property type="protein sequence ID" value="ABB12238.1"/>
    <property type="molecule type" value="Genomic_DNA"/>
</dbReference>
<dbReference type="RefSeq" id="WP_011355721.1">
    <property type="nucleotide sequence ID" value="NC_007511.1"/>
</dbReference>
<dbReference type="SMR" id="Q393X8"/>
<dbReference type="GeneID" id="45098453"/>
<dbReference type="KEGG" id="bur:Bcep18194_B2127"/>
<dbReference type="PATRIC" id="fig|482957.22.peg.5880"/>
<dbReference type="HOGENOM" id="CLU_014673_0_2_4"/>
<dbReference type="Proteomes" id="UP000002705">
    <property type="component" value="Chromosome 2"/>
</dbReference>
<dbReference type="GO" id="GO:0003723">
    <property type="term" value="F:RNA binding"/>
    <property type="evidence" value="ECO:0007669"/>
    <property type="project" value="InterPro"/>
</dbReference>
<dbReference type="GO" id="GO:0160147">
    <property type="term" value="F:tRNA pseudouridine(38-40) synthase activity"/>
    <property type="evidence" value="ECO:0007669"/>
    <property type="project" value="UniProtKB-EC"/>
</dbReference>
<dbReference type="GO" id="GO:0031119">
    <property type="term" value="P:tRNA pseudouridine synthesis"/>
    <property type="evidence" value="ECO:0007669"/>
    <property type="project" value="UniProtKB-UniRule"/>
</dbReference>
<dbReference type="CDD" id="cd02570">
    <property type="entry name" value="PseudoU_synth_EcTruA"/>
    <property type="match status" value="1"/>
</dbReference>
<dbReference type="FunFam" id="3.30.70.580:FF:000001">
    <property type="entry name" value="tRNA pseudouridine synthase A"/>
    <property type="match status" value="1"/>
</dbReference>
<dbReference type="Gene3D" id="3.30.70.660">
    <property type="entry name" value="Pseudouridine synthase I, catalytic domain, C-terminal subdomain"/>
    <property type="match status" value="1"/>
</dbReference>
<dbReference type="Gene3D" id="3.30.70.580">
    <property type="entry name" value="Pseudouridine synthase I, catalytic domain, N-terminal subdomain"/>
    <property type="match status" value="1"/>
</dbReference>
<dbReference type="HAMAP" id="MF_00171">
    <property type="entry name" value="TruA"/>
    <property type="match status" value="1"/>
</dbReference>
<dbReference type="InterPro" id="IPR020103">
    <property type="entry name" value="PsdUridine_synth_cat_dom_sf"/>
</dbReference>
<dbReference type="InterPro" id="IPR001406">
    <property type="entry name" value="PsdUridine_synth_TruA"/>
</dbReference>
<dbReference type="InterPro" id="IPR020097">
    <property type="entry name" value="PsdUridine_synth_TruA_a/b_dom"/>
</dbReference>
<dbReference type="InterPro" id="IPR020095">
    <property type="entry name" value="PsdUridine_synth_TruA_C"/>
</dbReference>
<dbReference type="InterPro" id="IPR020094">
    <property type="entry name" value="TruA/RsuA/RluB/E/F_N"/>
</dbReference>
<dbReference type="NCBIfam" id="TIGR00071">
    <property type="entry name" value="hisT_truA"/>
    <property type="match status" value="1"/>
</dbReference>
<dbReference type="PANTHER" id="PTHR11142">
    <property type="entry name" value="PSEUDOURIDYLATE SYNTHASE"/>
    <property type="match status" value="1"/>
</dbReference>
<dbReference type="PANTHER" id="PTHR11142:SF0">
    <property type="entry name" value="TRNA PSEUDOURIDINE SYNTHASE-LIKE 1"/>
    <property type="match status" value="1"/>
</dbReference>
<dbReference type="Pfam" id="PF01416">
    <property type="entry name" value="PseudoU_synth_1"/>
    <property type="match status" value="2"/>
</dbReference>
<dbReference type="PIRSF" id="PIRSF001430">
    <property type="entry name" value="tRNA_psdUrid_synth"/>
    <property type="match status" value="1"/>
</dbReference>
<dbReference type="SUPFAM" id="SSF55120">
    <property type="entry name" value="Pseudouridine synthase"/>
    <property type="match status" value="1"/>
</dbReference>
<organism>
    <name type="scientific">Burkholderia lata (strain ATCC 17760 / DSM 23089 / LMG 22485 / NCIMB 9086 / R18194 / 383)</name>
    <dbReference type="NCBI Taxonomy" id="482957"/>
    <lineage>
        <taxon>Bacteria</taxon>
        <taxon>Pseudomonadati</taxon>
        <taxon>Pseudomonadota</taxon>
        <taxon>Betaproteobacteria</taxon>
        <taxon>Burkholderiales</taxon>
        <taxon>Burkholderiaceae</taxon>
        <taxon>Burkholderia</taxon>
        <taxon>Burkholderia cepacia complex</taxon>
    </lineage>
</organism>
<feature type="chain" id="PRO_1000017059" description="tRNA pseudouridine synthase A">
    <location>
        <begin position="1"/>
        <end position="270"/>
    </location>
</feature>
<feature type="active site" description="Nucleophile" evidence="1">
    <location>
        <position position="51"/>
    </location>
</feature>
<feature type="binding site" evidence="1">
    <location>
        <position position="109"/>
    </location>
    <ligand>
        <name>substrate</name>
    </ligand>
</feature>
<gene>
    <name evidence="1" type="primary">truA</name>
    <name type="ordered locus">Bcep18194_B2127</name>
</gene>